<gene>
    <name type="ordered locus">At5g65350</name>
    <name type="ORF">MNA5.8</name>
</gene>
<dbReference type="EMBL" id="AB011479">
    <property type="protein sequence ID" value="BAB11557.1"/>
    <property type="molecule type" value="Genomic_DNA"/>
</dbReference>
<dbReference type="EMBL" id="CP002688">
    <property type="protein sequence ID" value="AED98042.1"/>
    <property type="molecule type" value="Genomic_DNA"/>
</dbReference>
<dbReference type="EMBL" id="BT029340">
    <property type="protein sequence ID" value="ABK32154.1"/>
    <property type="molecule type" value="mRNA"/>
</dbReference>
<dbReference type="RefSeq" id="NP_201338.1">
    <property type="nucleotide sequence ID" value="NM_125933.2"/>
</dbReference>
<dbReference type="SMR" id="Q9FKQ3"/>
<dbReference type="BioGRID" id="21902">
    <property type="interactions" value="8"/>
</dbReference>
<dbReference type="FunCoup" id="Q9FKQ3">
    <property type="interactions" value="519"/>
</dbReference>
<dbReference type="STRING" id="3702.Q9FKQ3"/>
<dbReference type="PaxDb" id="3702-AT5G65350.1"/>
<dbReference type="EnsemblPlants" id="AT5G65350.1">
    <property type="protein sequence ID" value="AT5G65350.1"/>
    <property type="gene ID" value="AT5G65350"/>
</dbReference>
<dbReference type="GeneID" id="836660"/>
<dbReference type="Gramene" id="AT5G65350.1">
    <property type="protein sequence ID" value="AT5G65350.1"/>
    <property type="gene ID" value="AT5G65350"/>
</dbReference>
<dbReference type="KEGG" id="ath:AT5G65350"/>
<dbReference type="Araport" id="AT5G65350"/>
<dbReference type="TAIR" id="AT5G65350">
    <property type="gene designation" value="HTR11"/>
</dbReference>
<dbReference type="eggNOG" id="KOG1745">
    <property type="taxonomic scope" value="Eukaryota"/>
</dbReference>
<dbReference type="HOGENOM" id="CLU_078295_4_0_1"/>
<dbReference type="InParanoid" id="Q9FKQ3"/>
<dbReference type="OMA" id="IRASWCC"/>
<dbReference type="PhylomeDB" id="Q9FKQ3"/>
<dbReference type="CD-CODE" id="4299E36E">
    <property type="entry name" value="Nucleolus"/>
</dbReference>
<dbReference type="PRO" id="PR:Q9FKQ3"/>
<dbReference type="Proteomes" id="UP000006548">
    <property type="component" value="Chromosome 5"/>
</dbReference>
<dbReference type="ExpressionAtlas" id="Q9FKQ3">
    <property type="expression patterns" value="baseline and differential"/>
</dbReference>
<dbReference type="GO" id="GO:0000786">
    <property type="term" value="C:nucleosome"/>
    <property type="evidence" value="ECO:0007669"/>
    <property type="project" value="UniProtKB-KW"/>
</dbReference>
<dbReference type="GO" id="GO:0005634">
    <property type="term" value="C:nucleus"/>
    <property type="evidence" value="ECO:0007669"/>
    <property type="project" value="UniProtKB-SubCell"/>
</dbReference>
<dbReference type="GO" id="GO:0009536">
    <property type="term" value="C:plastid"/>
    <property type="evidence" value="ECO:0007005"/>
    <property type="project" value="TAIR"/>
</dbReference>
<dbReference type="GO" id="GO:0003677">
    <property type="term" value="F:DNA binding"/>
    <property type="evidence" value="ECO:0007669"/>
    <property type="project" value="UniProtKB-KW"/>
</dbReference>
<dbReference type="GO" id="GO:0046982">
    <property type="term" value="F:protein heterodimerization activity"/>
    <property type="evidence" value="ECO:0007669"/>
    <property type="project" value="InterPro"/>
</dbReference>
<dbReference type="GO" id="GO:0030527">
    <property type="term" value="F:structural constituent of chromatin"/>
    <property type="evidence" value="ECO:0007669"/>
    <property type="project" value="InterPro"/>
</dbReference>
<dbReference type="CDD" id="cd22911">
    <property type="entry name" value="HFD_H3"/>
    <property type="match status" value="1"/>
</dbReference>
<dbReference type="FunFam" id="1.10.20.10:FF:000078">
    <property type="entry name" value="Histone H3"/>
    <property type="match status" value="1"/>
</dbReference>
<dbReference type="FunFam" id="1.10.20.10:FF:000044">
    <property type="entry name" value="Histone H3.3"/>
    <property type="match status" value="1"/>
</dbReference>
<dbReference type="Gene3D" id="1.10.20.10">
    <property type="entry name" value="Histone, subunit A"/>
    <property type="match status" value="1"/>
</dbReference>
<dbReference type="InterPro" id="IPR009072">
    <property type="entry name" value="Histone-fold"/>
</dbReference>
<dbReference type="InterPro" id="IPR007125">
    <property type="entry name" value="Histone_H2A/H2B/H3"/>
</dbReference>
<dbReference type="InterPro" id="IPR000164">
    <property type="entry name" value="Histone_H3/CENP-A"/>
</dbReference>
<dbReference type="PANTHER" id="PTHR11426">
    <property type="entry name" value="HISTONE H3"/>
    <property type="match status" value="1"/>
</dbReference>
<dbReference type="Pfam" id="PF00125">
    <property type="entry name" value="Histone"/>
    <property type="match status" value="1"/>
</dbReference>
<dbReference type="PRINTS" id="PR00622">
    <property type="entry name" value="HISTONEH3"/>
</dbReference>
<dbReference type="SMART" id="SM00428">
    <property type="entry name" value="H3"/>
    <property type="match status" value="1"/>
</dbReference>
<dbReference type="SUPFAM" id="SSF47113">
    <property type="entry name" value="Histone-fold"/>
    <property type="match status" value="1"/>
</dbReference>
<dbReference type="PROSITE" id="PS00322">
    <property type="entry name" value="HISTONE_H3_1"/>
    <property type="match status" value="1"/>
</dbReference>
<dbReference type="PROSITE" id="PS00959">
    <property type="entry name" value="HISTONE_H3_2"/>
    <property type="match status" value="1"/>
</dbReference>
<protein>
    <recommendedName>
        <fullName>Histone H3-like 5</fullName>
    </recommendedName>
</protein>
<accession>Q9FKQ3</accession>
<comment type="function">
    <text evidence="1">Core component of nucleosome. Nucleosomes wrap and compact DNA into chromatin, limiting DNA accessibility to the cellular machineries which require DNA as a template. Histones thereby play a central role in transcription regulation, DNA repair, DNA replication and chromosomal stability. DNA accessibility is regulated via a complex set of post-translational modifications of histones, also called histone code, and nucleosome remodeling (By similarity).</text>
</comment>
<comment type="subunit">
    <text evidence="1">The nucleosome is a histone octamer containing two molecules each of H2A, H2B, H3 and H4 assembled in one H3-H4 heterotetramer and two H2A-H2B heterodimers. The octamer wraps approximately 147 bp of DNA (By similarity).</text>
</comment>
<comment type="subcellular location">
    <subcellularLocation>
        <location evidence="1">Nucleus</location>
    </subcellularLocation>
    <subcellularLocation>
        <location evidence="1">Chromosome</location>
    </subcellularLocation>
</comment>
<comment type="similarity">
    <text evidence="4">Belongs to the histone H3 family.</text>
</comment>
<name>H3L5_ARATH</name>
<feature type="chain" id="PRO_0000264609" description="Histone H3-like 5">
    <location>
        <begin position="1"/>
        <end position="139"/>
    </location>
</feature>
<feature type="region of interest" description="Disordered" evidence="3">
    <location>
        <begin position="1"/>
        <end position="43"/>
    </location>
</feature>
<feature type="compositionally biased region" description="Polar residues" evidence="3">
    <location>
        <begin position="1"/>
        <end position="10"/>
    </location>
</feature>
<feature type="modified residue" description="N6,N6,N6-trimethyllysine; alternate" evidence="2">
    <location>
        <position position="5"/>
    </location>
</feature>
<feature type="modified residue" description="N6,N6-dimethyllysine; alternate" evidence="2">
    <location>
        <position position="5"/>
    </location>
</feature>
<feature type="modified residue" description="N6-methyllysine; alternate" evidence="2">
    <location>
        <position position="5"/>
    </location>
</feature>
<feature type="modified residue" description="Phosphoserine" evidence="2">
    <location>
        <position position="11"/>
    </location>
</feature>
<feature type="modified residue" description="Phosphothreonine" evidence="2">
    <location>
        <position position="12"/>
    </location>
</feature>
<feature type="modified residue" description="N6-acetyllysine" evidence="2">
    <location>
        <position position="15"/>
    </location>
</feature>
<feature type="modified residue" description="N6-acetyllysine; alternate" evidence="2">
    <location>
        <position position="19"/>
    </location>
</feature>
<feature type="modified residue" description="N6-methyllysine; alternate" evidence="2">
    <location>
        <position position="19"/>
    </location>
</feature>
<feature type="modified residue" description="N6-acetyllysine; alternate" evidence="2">
    <location>
        <position position="24"/>
    </location>
</feature>
<feature type="modified residue" description="N6-methyllysine; alternate" evidence="2">
    <location>
        <position position="24"/>
    </location>
</feature>
<feature type="modified residue" description="Phosphoserine" evidence="2">
    <location>
        <position position="29"/>
    </location>
</feature>
<feature type="modified residue" description="N6,N6,N6-trimethyllysine; alternate" evidence="2">
    <location>
        <position position="37"/>
    </location>
</feature>
<feature type="modified residue" description="N6,N6-dimethyllysine; alternate" evidence="2">
    <location>
        <position position="37"/>
    </location>
</feature>
<feature type="modified residue" description="N6-methyllysine; alternate" evidence="2">
    <location>
        <position position="37"/>
    </location>
</feature>
<proteinExistence type="evidence at transcript level"/>
<organism>
    <name type="scientific">Arabidopsis thaliana</name>
    <name type="common">Mouse-ear cress</name>
    <dbReference type="NCBI Taxonomy" id="3702"/>
    <lineage>
        <taxon>Eukaryota</taxon>
        <taxon>Viridiplantae</taxon>
        <taxon>Streptophyta</taxon>
        <taxon>Embryophyta</taxon>
        <taxon>Tracheophyta</taxon>
        <taxon>Spermatophyta</taxon>
        <taxon>Magnoliopsida</taxon>
        <taxon>eudicotyledons</taxon>
        <taxon>Gunneridae</taxon>
        <taxon>Pentapetalae</taxon>
        <taxon>rosids</taxon>
        <taxon>malvids</taxon>
        <taxon>Brassicales</taxon>
        <taxon>Brassicaceae</taxon>
        <taxon>Camelineae</taxon>
        <taxon>Arabidopsis</taxon>
    </lineage>
</organism>
<evidence type="ECO:0000250" key="1"/>
<evidence type="ECO:0000250" key="2">
    <source>
        <dbReference type="UniProtKB" id="P59226"/>
    </source>
</evidence>
<evidence type="ECO:0000256" key="3">
    <source>
        <dbReference type="SAM" id="MobiDB-lite"/>
    </source>
</evidence>
<evidence type="ECO:0000305" key="4"/>
<sequence length="139" mass="15591">MARTKQTARISTGGKAPRKQLAPKAARQSAPATGGVKKPHRFRPGTVALRDIRKYQKSTEILIRKLPFQRLVREIAQDFKTDLRFQSSAVAALQEAAEAYLVGLFEDTNLCAIHAKRVTIMPKEIQLARRIRGERARGE</sequence>
<reference key="1">
    <citation type="journal article" date="1998" name="DNA Res.">
        <title>Structural analysis of Arabidopsis thaliana chromosome 5. V. Sequence features of the regions of 1,381,565 bp covered by twenty one physically assigned P1 and TAC clones.</title>
        <authorList>
            <person name="Kaneko T."/>
            <person name="Kotani H."/>
            <person name="Nakamura Y."/>
            <person name="Sato S."/>
            <person name="Asamizu E."/>
            <person name="Miyajima N."/>
            <person name="Tabata S."/>
        </authorList>
    </citation>
    <scope>NUCLEOTIDE SEQUENCE [LARGE SCALE GENOMIC DNA]</scope>
    <source>
        <strain>cv. Columbia</strain>
    </source>
</reference>
<reference key="2">
    <citation type="journal article" date="2017" name="Plant J.">
        <title>Araport11: a complete reannotation of the Arabidopsis thaliana reference genome.</title>
        <authorList>
            <person name="Cheng C.Y."/>
            <person name="Krishnakumar V."/>
            <person name="Chan A.P."/>
            <person name="Thibaud-Nissen F."/>
            <person name="Schobel S."/>
            <person name="Town C.D."/>
        </authorList>
    </citation>
    <scope>GENOME REANNOTATION</scope>
    <source>
        <strain>cv. Columbia</strain>
    </source>
</reference>
<reference key="3">
    <citation type="submission" date="2006-11" db="EMBL/GenBank/DDBJ databases">
        <title>Arabidopsis ORF clones.</title>
        <authorList>
            <person name="Bautista V.R."/>
            <person name="Kim C.J."/>
            <person name="Chen H."/>
            <person name="Quinitio C."/>
            <person name="Ecker J.R."/>
        </authorList>
    </citation>
    <scope>NUCLEOTIDE SEQUENCE [LARGE SCALE MRNA]</scope>
    <source>
        <strain>cv. Columbia</strain>
    </source>
</reference>
<reference key="4">
    <citation type="journal article" date="2005" name="Plant J.">
        <title>Analysis of the histone H3 gene family in Arabidopsis and identification of the male-gamete-specific variant AtMGH3.</title>
        <authorList>
            <person name="Okada T."/>
            <person name="Endo M."/>
            <person name="Singh M.B."/>
            <person name="Bhalla P.L."/>
        </authorList>
    </citation>
    <scope>IDENTIFICATION</scope>
</reference>
<keyword id="KW-0007">Acetylation</keyword>
<keyword id="KW-0158">Chromosome</keyword>
<keyword id="KW-0238">DNA-binding</keyword>
<keyword id="KW-0488">Methylation</keyword>
<keyword id="KW-0544">Nucleosome core</keyword>
<keyword id="KW-0539">Nucleus</keyword>
<keyword id="KW-0597">Phosphoprotein</keyword>
<keyword id="KW-1185">Reference proteome</keyword>